<reference key="1">
    <citation type="journal article" date="2004" name="Nat. Genet.">
        <title>Complete sequencing and characterization of 21,243 full-length human cDNAs.</title>
        <authorList>
            <person name="Ota T."/>
            <person name="Suzuki Y."/>
            <person name="Nishikawa T."/>
            <person name="Otsuki T."/>
            <person name="Sugiyama T."/>
            <person name="Irie R."/>
            <person name="Wakamatsu A."/>
            <person name="Hayashi K."/>
            <person name="Sato H."/>
            <person name="Nagai K."/>
            <person name="Kimura K."/>
            <person name="Makita H."/>
            <person name="Sekine M."/>
            <person name="Obayashi M."/>
            <person name="Nishi T."/>
            <person name="Shibahara T."/>
            <person name="Tanaka T."/>
            <person name="Ishii S."/>
            <person name="Yamamoto J."/>
            <person name="Saito K."/>
            <person name="Kawai Y."/>
            <person name="Isono Y."/>
            <person name="Nakamura Y."/>
            <person name="Nagahari K."/>
            <person name="Murakami K."/>
            <person name="Yasuda T."/>
            <person name="Iwayanagi T."/>
            <person name="Wagatsuma M."/>
            <person name="Shiratori A."/>
            <person name="Sudo H."/>
            <person name="Hosoiri T."/>
            <person name="Kaku Y."/>
            <person name="Kodaira H."/>
            <person name="Kondo H."/>
            <person name="Sugawara M."/>
            <person name="Takahashi M."/>
            <person name="Kanda K."/>
            <person name="Yokoi T."/>
            <person name="Furuya T."/>
            <person name="Kikkawa E."/>
            <person name="Omura Y."/>
            <person name="Abe K."/>
            <person name="Kamihara K."/>
            <person name="Katsuta N."/>
            <person name="Sato K."/>
            <person name="Tanikawa M."/>
            <person name="Yamazaki M."/>
            <person name="Ninomiya K."/>
            <person name="Ishibashi T."/>
            <person name="Yamashita H."/>
            <person name="Murakawa K."/>
            <person name="Fujimori K."/>
            <person name="Tanai H."/>
            <person name="Kimata M."/>
            <person name="Watanabe M."/>
            <person name="Hiraoka S."/>
            <person name="Chiba Y."/>
            <person name="Ishida S."/>
            <person name="Ono Y."/>
            <person name="Takiguchi S."/>
            <person name="Watanabe S."/>
            <person name="Yosida M."/>
            <person name="Hotuta T."/>
            <person name="Kusano J."/>
            <person name="Kanehori K."/>
            <person name="Takahashi-Fujii A."/>
            <person name="Hara H."/>
            <person name="Tanase T.-O."/>
            <person name="Nomura Y."/>
            <person name="Togiya S."/>
            <person name="Komai F."/>
            <person name="Hara R."/>
            <person name="Takeuchi K."/>
            <person name="Arita M."/>
            <person name="Imose N."/>
            <person name="Musashino K."/>
            <person name="Yuuki H."/>
            <person name="Oshima A."/>
            <person name="Sasaki N."/>
            <person name="Aotsuka S."/>
            <person name="Yoshikawa Y."/>
            <person name="Matsunawa H."/>
            <person name="Ichihara T."/>
            <person name="Shiohata N."/>
            <person name="Sano S."/>
            <person name="Moriya S."/>
            <person name="Momiyama H."/>
            <person name="Satoh N."/>
            <person name="Takami S."/>
            <person name="Terashima Y."/>
            <person name="Suzuki O."/>
            <person name="Nakagawa S."/>
            <person name="Senoh A."/>
            <person name="Mizoguchi H."/>
            <person name="Goto Y."/>
            <person name="Shimizu F."/>
            <person name="Wakebe H."/>
            <person name="Hishigaki H."/>
            <person name="Watanabe T."/>
            <person name="Sugiyama A."/>
            <person name="Takemoto M."/>
            <person name="Kawakami B."/>
            <person name="Yamazaki M."/>
            <person name="Watanabe K."/>
            <person name="Kumagai A."/>
            <person name="Itakura S."/>
            <person name="Fukuzumi Y."/>
            <person name="Fujimori Y."/>
            <person name="Komiyama M."/>
            <person name="Tashiro H."/>
            <person name="Tanigami A."/>
            <person name="Fujiwara T."/>
            <person name="Ono T."/>
            <person name="Yamada K."/>
            <person name="Fujii Y."/>
            <person name="Ozaki K."/>
            <person name="Hirao M."/>
            <person name="Ohmori Y."/>
            <person name="Kawabata A."/>
            <person name="Hikiji T."/>
            <person name="Kobatake N."/>
            <person name="Inagaki H."/>
            <person name="Ikema Y."/>
            <person name="Okamoto S."/>
            <person name="Okitani R."/>
            <person name="Kawakami T."/>
            <person name="Noguchi S."/>
            <person name="Itoh T."/>
            <person name="Shigeta K."/>
            <person name="Senba T."/>
            <person name="Matsumura K."/>
            <person name="Nakajima Y."/>
            <person name="Mizuno T."/>
            <person name="Morinaga M."/>
            <person name="Sasaki M."/>
            <person name="Togashi T."/>
            <person name="Oyama M."/>
            <person name="Hata H."/>
            <person name="Watanabe M."/>
            <person name="Komatsu T."/>
            <person name="Mizushima-Sugano J."/>
            <person name="Satoh T."/>
            <person name="Shirai Y."/>
            <person name="Takahashi Y."/>
            <person name="Nakagawa K."/>
            <person name="Okumura K."/>
            <person name="Nagase T."/>
            <person name="Nomura N."/>
            <person name="Kikuchi H."/>
            <person name="Masuho Y."/>
            <person name="Yamashita R."/>
            <person name="Nakai K."/>
            <person name="Yada T."/>
            <person name="Nakamura Y."/>
            <person name="Ohara O."/>
            <person name="Isogai T."/>
            <person name="Sugano S."/>
        </authorList>
    </citation>
    <scope>NUCLEOTIDE SEQUENCE [LARGE SCALE MRNA]</scope>
    <source>
        <tissue>Stomach</tissue>
        <tissue>Teratocarcinoma</tissue>
    </source>
</reference>
<reference key="2">
    <citation type="journal article" date="2003" name="Nature">
        <title>The DNA sequence and analysis of human chromosome 6.</title>
        <authorList>
            <person name="Mungall A.J."/>
            <person name="Palmer S.A."/>
            <person name="Sims S.K."/>
            <person name="Edwards C.A."/>
            <person name="Ashurst J.L."/>
            <person name="Wilming L."/>
            <person name="Jones M.C."/>
            <person name="Horton R."/>
            <person name="Hunt S.E."/>
            <person name="Scott C.E."/>
            <person name="Gilbert J.G.R."/>
            <person name="Clamp M.E."/>
            <person name="Bethel G."/>
            <person name="Milne S."/>
            <person name="Ainscough R."/>
            <person name="Almeida J.P."/>
            <person name="Ambrose K.D."/>
            <person name="Andrews T.D."/>
            <person name="Ashwell R.I.S."/>
            <person name="Babbage A.K."/>
            <person name="Bagguley C.L."/>
            <person name="Bailey J."/>
            <person name="Banerjee R."/>
            <person name="Barker D.J."/>
            <person name="Barlow K.F."/>
            <person name="Bates K."/>
            <person name="Beare D.M."/>
            <person name="Beasley H."/>
            <person name="Beasley O."/>
            <person name="Bird C.P."/>
            <person name="Blakey S.E."/>
            <person name="Bray-Allen S."/>
            <person name="Brook J."/>
            <person name="Brown A.J."/>
            <person name="Brown J.Y."/>
            <person name="Burford D.C."/>
            <person name="Burrill W."/>
            <person name="Burton J."/>
            <person name="Carder C."/>
            <person name="Carter N.P."/>
            <person name="Chapman J.C."/>
            <person name="Clark S.Y."/>
            <person name="Clark G."/>
            <person name="Clee C.M."/>
            <person name="Clegg S."/>
            <person name="Cobley V."/>
            <person name="Collier R.E."/>
            <person name="Collins J.E."/>
            <person name="Colman L.K."/>
            <person name="Corby N.R."/>
            <person name="Coville G.J."/>
            <person name="Culley K.M."/>
            <person name="Dhami P."/>
            <person name="Davies J."/>
            <person name="Dunn M."/>
            <person name="Earthrowl M.E."/>
            <person name="Ellington A.E."/>
            <person name="Evans K.A."/>
            <person name="Faulkner L."/>
            <person name="Francis M.D."/>
            <person name="Frankish A."/>
            <person name="Frankland J."/>
            <person name="French L."/>
            <person name="Garner P."/>
            <person name="Garnett J."/>
            <person name="Ghori M.J."/>
            <person name="Gilby L.M."/>
            <person name="Gillson C.J."/>
            <person name="Glithero R.J."/>
            <person name="Grafham D.V."/>
            <person name="Grant M."/>
            <person name="Gribble S."/>
            <person name="Griffiths C."/>
            <person name="Griffiths M.N.D."/>
            <person name="Hall R."/>
            <person name="Halls K.S."/>
            <person name="Hammond S."/>
            <person name="Harley J.L."/>
            <person name="Hart E.A."/>
            <person name="Heath P.D."/>
            <person name="Heathcott R."/>
            <person name="Holmes S.J."/>
            <person name="Howden P.J."/>
            <person name="Howe K.L."/>
            <person name="Howell G.R."/>
            <person name="Huckle E."/>
            <person name="Humphray S.J."/>
            <person name="Humphries M.D."/>
            <person name="Hunt A.R."/>
            <person name="Johnson C.M."/>
            <person name="Joy A.A."/>
            <person name="Kay M."/>
            <person name="Keenan S.J."/>
            <person name="Kimberley A.M."/>
            <person name="King A."/>
            <person name="Laird G.K."/>
            <person name="Langford C."/>
            <person name="Lawlor S."/>
            <person name="Leongamornlert D.A."/>
            <person name="Leversha M."/>
            <person name="Lloyd C.R."/>
            <person name="Lloyd D.M."/>
            <person name="Loveland J.E."/>
            <person name="Lovell J."/>
            <person name="Martin S."/>
            <person name="Mashreghi-Mohammadi M."/>
            <person name="Maslen G.L."/>
            <person name="Matthews L."/>
            <person name="McCann O.T."/>
            <person name="McLaren S.J."/>
            <person name="McLay K."/>
            <person name="McMurray A."/>
            <person name="Moore M.J.F."/>
            <person name="Mullikin J.C."/>
            <person name="Niblett D."/>
            <person name="Nickerson T."/>
            <person name="Novik K.L."/>
            <person name="Oliver K."/>
            <person name="Overton-Larty E.K."/>
            <person name="Parker A."/>
            <person name="Patel R."/>
            <person name="Pearce A.V."/>
            <person name="Peck A.I."/>
            <person name="Phillimore B.J.C.T."/>
            <person name="Phillips S."/>
            <person name="Plumb R.W."/>
            <person name="Porter K.M."/>
            <person name="Ramsey Y."/>
            <person name="Ranby S.A."/>
            <person name="Rice C.M."/>
            <person name="Ross M.T."/>
            <person name="Searle S.M."/>
            <person name="Sehra H.K."/>
            <person name="Sheridan E."/>
            <person name="Skuce C.D."/>
            <person name="Smith S."/>
            <person name="Smith M."/>
            <person name="Spraggon L."/>
            <person name="Squares S.L."/>
            <person name="Steward C.A."/>
            <person name="Sycamore N."/>
            <person name="Tamlyn-Hall G."/>
            <person name="Tester J."/>
            <person name="Theaker A.J."/>
            <person name="Thomas D.W."/>
            <person name="Thorpe A."/>
            <person name="Tracey A."/>
            <person name="Tromans A."/>
            <person name="Tubby B."/>
            <person name="Wall M."/>
            <person name="Wallis J.M."/>
            <person name="West A.P."/>
            <person name="White S.S."/>
            <person name="Whitehead S.L."/>
            <person name="Whittaker H."/>
            <person name="Wild A."/>
            <person name="Willey D.J."/>
            <person name="Wilmer T.E."/>
            <person name="Wood J.M."/>
            <person name="Wray P.W."/>
            <person name="Wyatt J.C."/>
            <person name="Young L."/>
            <person name="Younger R.M."/>
            <person name="Bentley D.R."/>
            <person name="Coulson A."/>
            <person name="Durbin R.M."/>
            <person name="Hubbard T."/>
            <person name="Sulston J.E."/>
            <person name="Dunham I."/>
            <person name="Rogers J."/>
            <person name="Beck S."/>
        </authorList>
    </citation>
    <scope>NUCLEOTIDE SEQUENCE [LARGE SCALE GENOMIC DNA]</scope>
</reference>
<reference key="3">
    <citation type="journal article" date="2004" name="Genome Res.">
        <title>The status, quality, and expansion of the NIH full-length cDNA project: the Mammalian Gene Collection (MGC).</title>
        <authorList>
            <consortium name="The MGC Project Team"/>
        </authorList>
    </citation>
    <scope>NUCLEOTIDE SEQUENCE [LARGE SCALE MRNA]</scope>
    <source>
        <tissue>Uterus</tissue>
    </source>
</reference>
<reference key="4">
    <citation type="journal article" date="2006" name="Nat. Cell Biol.">
        <title>The CENP-H-I complex is required for the efficient incorporation of newly synthesized CENP-A into centromeres.</title>
        <authorList>
            <person name="Okada M."/>
            <person name="Cheeseman I.M."/>
            <person name="Hori T."/>
            <person name="Okawa K."/>
            <person name="McLeod I.X."/>
            <person name="Yates J.R. III"/>
            <person name="Desai A."/>
            <person name="Fukagawa T."/>
        </authorList>
    </citation>
    <scope>IDENTIFICATION BY MASS SPECTROMETRY</scope>
    <scope>IDENTIFICATION IN A COMPLEX WITH CENPH; CENPI; CENPK; CENPN; CENPO; CENPP; CENPR AND CENPU</scope>
    <scope>FUNCTION</scope>
    <scope>SUBCELLULAR LOCATION</scope>
</reference>
<reference key="5">
    <citation type="journal article" date="2006" name="Nat. Cell Biol.">
        <title>The human CENP-A centromeric nucleosome-associated complex.</title>
        <authorList>
            <person name="Foltz D.R."/>
            <person name="Jansen L.E.T."/>
            <person name="Black B.E."/>
            <person name="Bailey A.O."/>
            <person name="Yates J.R. III"/>
            <person name="Cleveland D.W."/>
        </authorList>
    </citation>
    <scope>IDENTIFICATION BY MASS SPECTROMETRY</scope>
    <scope>IDENTIFICATION IN THE CENPA-CAD COMPLEX WITH CENPI; CENPK; CENPL; CENPO; CENPP; CENPR AND CENPS</scope>
</reference>
<reference key="6">
    <citation type="journal article" date="2010" name="Sci. Signal.">
        <title>Quantitative phosphoproteomics reveals widespread full phosphorylation site occupancy during mitosis.</title>
        <authorList>
            <person name="Olsen J.V."/>
            <person name="Vermeulen M."/>
            <person name="Santamaria A."/>
            <person name="Kumar C."/>
            <person name="Miller M.L."/>
            <person name="Jensen L.J."/>
            <person name="Gnad F."/>
            <person name="Cox J."/>
            <person name="Jensen T.S."/>
            <person name="Nigg E.A."/>
            <person name="Brunak S."/>
            <person name="Mann M."/>
        </authorList>
    </citation>
    <scope>PHOSPHORYLATION [LARGE SCALE ANALYSIS] AT SER-31 AND SER-249</scope>
    <scope>IDENTIFICATION BY MASS SPECTROMETRY [LARGE SCALE ANALYSIS]</scope>
    <source>
        <tissue>Cervix carcinoma</tissue>
    </source>
</reference>
<reference key="7">
    <citation type="journal article" date="2011" name="Sci. Signal.">
        <title>System-wide temporal characterization of the proteome and phosphoproteome of human embryonic stem cell differentiation.</title>
        <authorList>
            <person name="Rigbolt K.T."/>
            <person name="Prokhorova T.A."/>
            <person name="Akimov V."/>
            <person name="Henningsen J."/>
            <person name="Johansen P.T."/>
            <person name="Kratchmarova I."/>
            <person name="Kassem M."/>
            <person name="Mann M."/>
            <person name="Olsen J.V."/>
            <person name="Blagoev B."/>
        </authorList>
    </citation>
    <scope>PHOSPHORYLATION [LARGE SCALE ANALYSIS] AT SER-50</scope>
    <scope>IDENTIFICATION BY MASS SPECTROMETRY [LARGE SCALE ANALYSIS]</scope>
</reference>
<reference key="8">
    <citation type="journal article" date="2013" name="J. Proteome Res.">
        <title>Toward a comprehensive characterization of a human cancer cell phosphoproteome.</title>
        <authorList>
            <person name="Zhou H."/>
            <person name="Di Palma S."/>
            <person name="Preisinger C."/>
            <person name="Peng M."/>
            <person name="Polat A.N."/>
            <person name="Heck A.J."/>
            <person name="Mohammed S."/>
        </authorList>
    </citation>
    <scope>PHOSPHORYLATION [LARGE SCALE ANALYSIS] AT SER-249</scope>
    <scope>IDENTIFICATION BY MASS SPECTROMETRY [LARGE SCALE ANALYSIS]</scope>
    <source>
        <tissue>Cervix carcinoma</tissue>
    </source>
</reference>
<reference key="9">
    <citation type="journal article" date="2015" name="J. Cell Sci.">
        <title>Chromosome congression is promoted by CENP-Q- and CENP-E-dependent pathways.</title>
        <authorList>
            <person name="Bancroft J."/>
            <person name="Auckland P."/>
            <person name="Samora C.P."/>
            <person name="McAinsh A.D."/>
        </authorList>
    </citation>
    <scope>FUNCTION</scope>
    <scope>PHOSPHORYLATION AT SER-50</scope>
    <scope>MUTAGENESIS OF SER-50</scope>
</reference>
<evidence type="ECO:0000255" key="1"/>
<evidence type="ECO:0000256" key="2">
    <source>
        <dbReference type="SAM" id="MobiDB-lite"/>
    </source>
</evidence>
<evidence type="ECO:0000269" key="3">
    <source>
    </source>
</evidence>
<evidence type="ECO:0000269" key="4">
    <source>
    </source>
</evidence>
<evidence type="ECO:0000269" key="5">
    <source>
    </source>
</evidence>
<evidence type="ECO:0000305" key="6"/>
<evidence type="ECO:0007744" key="7">
    <source>
    </source>
</evidence>
<evidence type="ECO:0007744" key="8">
    <source>
    </source>
</evidence>
<evidence type="ECO:0007744" key="9">
    <source>
    </source>
</evidence>
<evidence type="ECO:0007829" key="10">
    <source>
        <dbReference type="PDB" id="7PKN"/>
    </source>
</evidence>
<evidence type="ECO:0007829" key="11">
    <source>
        <dbReference type="PDB" id="7R5S"/>
    </source>
</evidence>
<feature type="chain" id="PRO_0000089534" description="Centromere protein Q">
    <location>
        <begin position="1"/>
        <end position="268"/>
    </location>
</feature>
<feature type="region of interest" description="Disordered" evidence="2">
    <location>
        <begin position="1"/>
        <end position="80"/>
    </location>
</feature>
<feature type="coiled-coil region" evidence="1">
    <location>
        <begin position="170"/>
        <end position="206"/>
    </location>
</feature>
<feature type="compositionally biased region" description="Basic residues" evidence="2">
    <location>
        <begin position="58"/>
        <end position="72"/>
    </location>
</feature>
<feature type="modified residue" description="Phosphoserine" evidence="7">
    <location>
        <position position="31"/>
    </location>
</feature>
<feature type="modified residue" description="Phosphoserine" evidence="5 8">
    <location>
        <position position="50"/>
    </location>
</feature>
<feature type="modified residue" description="Phosphoserine" evidence="7 9">
    <location>
        <position position="249"/>
    </location>
</feature>
<feature type="sequence variant" id="VAR_022857" description="In dbSNP:rs4267943.">
    <original>G</original>
    <variation>R</variation>
    <location>
        <position position="63"/>
    </location>
</feature>
<feature type="sequence variant" id="VAR_024303" description="In dbSNP:rs2501968.">
    <original>D</original>
    <variation>G</variation>
    <location>
        <position position="266"/>
    </location>
</feature>
<feature type="mutagenesis site" description="Abolishes the recruitment CENPE to kinetochores but has no effect on recruitment of PLK1 to knetochores." evidence="5">
    <original>S</original>
    <variation>A</variation>
    <location>
        <position position="50"/>
    </location>
</feature>
<feature type="mutagenesis site" description="No loss of the recruitment CENPE to kinetochores." evidence="5">
    <original>S</original>
    <variation>D</variation>
    <location>
        <position position="50"/>
    </location>
</feature>
<feature type="helix" evidence="11">
    <location>
        <begin position="78"/>
        <end position="97"/>
    </location>
</feature>
<feature type="helix" evidence="11">
    <location>
        <begin position="103"/>
        <end position="123"/>
    </location>
</feature>
<feature type="helix" evidence="10">
    <location>
        <begin position="134"/>
        <end position="136"/>
    </location>
</feature>
<feature type="helix" evidence="11">
    <location>
        <begin position="137"/>
        <end position="196"/>
    </location>
</feature>
<feature type="strand" evidence="11">
    <location>
        <begin position="199"/>
        <end position="201"/>
    </location>
</feature>
<feature type="helix" evidence="11">
    <location>
        <begin position="216"/>
        <end position="219"/>
    </location>
</feature>
<feature type="helix" evidence="11">
    <location>
        <begin position="224"/>
        <end position="231"/>
    </location>
</feature>
<feature type="helix" evidence="11">
    <location>
        <begin position="235"/>
        <end position="247"/>
    </location>
</feature>
<feature type="helix" evidence="11">
    <location>
        <begin position="249"/>
        <end position="267"/>
    </location>
</feature>
<sequence length="268" mass="30595">MSGKANASKKNAQQLKRNPKRKKDNEEVVLSENKVRNTVKKNKNHLKDLSSEGQTKHTNLKHGKTAASKRKTWQPLSKSTRDHLQTMMESVIMTILSNSIKEKEEIQYHLNFLKKRLLQQCETLKVPPKKMEDLTNVSSLLNMERARDKANEEGLALLQEEIDKMVETTELMTGNIQSLKNKIQILASEVEEEEERVKQMHQINSSGVLSLPELSQKTLKAPTLQKEILALIPNQNALLKDLDILHNSSQMKSMSTFIEEAYKKLDAS</sequence>
<keyword id="KW-0002">3D-structure</keyword>
<keyword id="KW-0137">Centromere</keyword>
<keyword id="KW-0158">Chromosome</keyword>
<keyword id="KW-0175">Coiled coil</keyword>
<keyword id="KW-0539">Nucleus</keyword>
<keyword id="KW-0597">Phosphoprotein</keyword>
<keyword id="KW-1267">Proteomics identification</keyword>
<keyword id="KW-1185">Reference proteome</keyword>
<dbReference type="EMBL" id="AK001407">
    <property type="protein sequence ID" value="BAA91672.1"/>
    <property type="status" value="ALT_INIT"/>
    <property type="molecule type" value="mRNA"/>
</dbReference>
<dbReference type="EMBL" id="AK293016">
    <property type="protein sequence ID" value="BAF85705.1"/>
    <property type="molecule type" value="mRNA"/>
</dbReference>
<dbReference type="EMBL" id="AL590244">
    <property type="status" value="NOT_ANNOTATED_CDS"/>
    <property type="molecule type" value="Genomic_DNA"/>
</dbReference>
<dbReference type="EMBL" id="AL590668">
    <property type="status" value="NOT_ANNOTATED_CDS"/>
    <property type="molecule type" value="Genomic_DNA"/>
</dbReference>
<dbReference type="EMBL" id="BC016279">
    <property type="protein sequence ID" value="AAH16279.2"/>
    <property type="molecule type" value="mRNA"/>
</dbReference>
<dbReference type="CCDS" id="CCDS4925.1"/>
<dbReference type="RefSeq" id="NP_060602.2">
    <property type="nucleotide sequence ID" value="NM_018132.3"/>
</dbReference>
<dbReference type="RefSeq" id="XP_005249262.1">
    <property type="nucleotide sequence ID" value="XM_005249205.2"/>
</dbReference>
<dbReference type="PDB" id="7PB8">
    <property type="method" value="X-ray"/>
    <property type="resolution" value="3.68 A"/>
    <property type="chains" value="Q=133-268"/>
</dbReference>
<dbReference type="PDB" id="7PKN">
    <property type="method" value="EM"/>
    <property type="resolution" value="3.20 A"/>
    <property type="chains" value="Q=1-268"/>
</dbReference>
<dbReference type="PDB" id="7QOO">
    <property type="method" value="EM"/>
    <property type="resolution" value="4.60 A"/>
    <property type="chains" value="Q=1-268"/>
</dbReference>
<dbReference type="PDB" id="7R5S">
    <property type="method" value="EM"/>
    <property type="resolution" value="2.83 A"/>
    <property type="chains" value="Q=1-268"/>
</dbReference>
<dbReference type="PDB" id="7R5V">
    <property type="method" value="EM"/>
    <property type="resolution" value="4.55 A"/>
    <property type="chains" value="Q=1-268"/>
</dbReference>
<dbReference type="PDB" id="7XHN">
    <property type="method" value="EM"/>
    <property type="resolution" value="3.71 A"/>
    <property type="chains" value="Q=1-268"/>
</dbReference>
<dbReference type="PDB" id="7XHO">
    <property type="method" value="EM"/>
    <property type="resolution" value="3.29 A"/>
    <property type="chains" value="Q=1-268"/>
</dbReference>
<dbReference type="PDB" id="7YWX">
    <property type="method" value="EM"/>
    <property type="resolution" value="12.00 A"/>
    <property type="chains" value="Q=1-268"/>
</dbReference>
<dbReference type="PDB" id="7YYH">
    <property type="method" value="EM"/>
    <property type="resolution" value="8.90 A"/>
    <property type="chains" value="Q=1-268"/>
</dbReference>
<dbReference type="PDBsum" id="7PB8"/>
<dbReference type="PDBsum" id="7PKN"/>
<dbReference type="PDBsum" id="7QOO"/>
<dbReference type="PDBsum" id="7R5S"/>
<dbReference type="PDBsum" id="7R5V"/>
<dbReference type="PDBsum" id="7XHN"/>
<dbReference type="PDBsum" id="7XHO"/>
<dbReference type="PDBsum" id="7YWX"/>
<dbReference type="PDBsum" id="7YYH"/>
<dbReference type="EMDB" id="EMD-13473"/>
<dbReference type="EMDB" id="EMD-14098"/>
<dbReference type="EMDB" id="EMD-14336"/>
<dbReference type="EMDB" id="EMD-14341"/>
<dbReference type="EMDB" id="EMD-14351"/>
<dbReference type="EMDB" id="EMD-14375"/>
<dbReference type="EMDB" id="EMD-33196"/>
<dbReference type="EMDB" id="EMD-33197"/>
<dbReference type="SMR" id="Q7L2Z9"/>
<dbReference type="BioGRID" id="120466">
    <property type="interactions" value="108"/>
</dbReference>
<dbReference type="ComplexPortal" id="CPX-5646">
    <property type="entry name" value="Kinetochore CCAN complex"/>
</dbReference>
<dbReference type="CORUM" id="Q7L2Z9"/>
<dbReference type="FunCoup" id="Q7L2Z9">
    <property type="interactions" value="3017"/>
</dbReference>
<dbReference type="IntAct" id="Q7L2Z9">
    <property type="interactions" value="97"/>
</dbReference>
<dbReference type="MINT" id="Q7L2Z9"/>
<dbReference type="STRING" id="9606.ENSP00000337289"/>
<dbReference type="iPTMnet" id="Q7L2Z9"/>
<dbReference type="PhosphoSitePlus" id="Q7L2Z9"/>
<dbReference type="BioMuta" id="CENPQ"/>
<dbReference type="DMDM" id="68565184"/>
<dbReference type="jPOST" id="Q7L2Z9"/>
<dbReference type="MassIVE" id="Q7L2Z9"/>
<dbReference type="PaxDb" id="9606-ENSP00000337289"/>
<dbReference type="PeptideAtlas" id="Q7L2Z9"/>
<dbReference type="ProteomicsDB" id="68768"/>
<dbReference type="Pumba" id="Q7L2Z9"/>
<dbReference type="Antibodypedia" id="30817">
    <property type="antibodies" value="144 antibodies from 24 providers"/>
</dbReference>
<dbReference type="DNASU" id="55166"/>
<dbReference type="Ensembl" id="ENST00000335783.4">
    <property type="protein sequence ID" value="ENSP00000337289.2"/>
    <property type="gene ID" value="ENSG00000031691.7"/>
</dbReference>
<dbReference type="GeneID" id="55166"/>
<dbReference type="KEGG" id="hsa:55166"/>
<dbReference type="MANE-Select" id="ENST00000335783.4">
    <property type="protein sequence ID" value="ENSP00000337289.2"/>
    <property type="RefSeq nucleotide sequence ID" value="NM_018132.4"/>
    <property type="RefSeq protein sequence ID" value="NP_060602.2"/>
</dbReference>
<dbReference type="UCSC" id="uc003ozh.2">
    <property type="organism name" value="human"/>
</dbReference>
<dbReference type="AGR" id="HGNC:21347"/>
<dbReference type="CTD" id="55166"/>
<dbReference type="DisGeNET" id="55166"/>
<dbReference type="GeneCards" id="CENPQ"/>
<dbReference type="HGNC" id="HGNC:21347">
    <property type="gene designation" value="CENPQ"/>
</dbReference>
<dbReference type="HPA" id="ENSG00000031691">
    <property type="expression patterns" value="Low tissue specificity"/>
</dbReference>
<dbReference type="MIM" id="611506">
    <property type="type" value="gene"/>
</dbReference>
<dbReference type="neXtProt" id="NX_Q7L2Z9"/>
<dbReference type="OpenTargets" id="ENSG00000031691"/>
<dbReference type="PharmGKB" id="PA134973276"/>
<dbReference type="VEuPathDB" id="HostDB:ENSG00000031691"/>
<dbReference type="eggNOG" id="ENOG502S34R">
    <property type="taxonomic scope" value="Eukaryota"/>
</dbReference>
<dbReference type="GeneTree" id="ENSGT00390000005599"/>
<dbReference type="HOGENOM" id="CLU_085740_0_0_1"/>
<dbReference type="InParanoid" id="Q7L2Z9"/>
<dbReference type="OMA" id="LESKIHW"/>
<dbReference type="OrthoDB" id="8927710at2759"/>
<dbReference type="PAN-GO" id="Q7L2Z9">
    <property type="GO annotations" value="2 GO annotations based on evolutionary models"/>
</dbReference>
<dbReference type="PhylomeDB" id="Q7L2Z9"/>
<dbReference type="TreeFam" id="TF336238"/>
<dbReference type="PathwayCommons" id="Q7L2Z9"/>
<dbReference type="Reactome" id="R-HSA-141444">
    <property type="pathway name" value="Amplification of signal from unattached kinetochores via a MAD2 inhibitory signal"/>
</dbReference>
<dbReference type="Reactome" id="R-HSA-2467813">
    <property type="pathway name" value="Separation of Sister Chromatids"/>
</dbReference>
<dbReference type="Reactome" id="R-HSA-2500257">
    <property type="pathway name" value="Resolution of Sister Chromatid Cohesion"/>
</dbReference>
<dbReference type="Reactome" id="R-HSA-5663220">
    <property type="pathway name" value="RHO GTPases Activate Formins"/>
</dbReference>
<dbReference type="Reactome" id="R-HSA-606279">
    <property type="pathway name" value="Deposition of new CENPA-containing nucleosomes at the centromere"/>
</dbReference>
<dbReference type="Reactome" id="R-HSA-68877">
    <property type="pathway name" value="Mitotic Prometaphase"/>
</dbReference>
<dbReference type="Reactome" id="R-HSA-9648025">
    <property type="pathway name" value="EML4 and NUDC in mitotic spindle formation"/>
</dbReference>
<dbReference type="SignaLink" id="Q7L2Z9"/>
<dbReference type="SIGNOR" id="Q7L2Z9"/>
<dbReference type="BioGRID-ORCS" id="55166">
    <property type="hits" value="70 hits in 1158 CRISPR screens"/>
</dbReference>
<dbReference type="ChiTaRS" id="CENPQ">
    <property type="organism name" value="human"/>
</dbReference>
<dbReference type="GenomeRNAi" id="55166"/>
<dbReference type="Pharos" id="Q7L2Z9">
    <property type="development level" value="Tbio"/>
</dbReference>
<dbReference type="PRO" id="PR:Q7L2Z9"/>
<dbReference type="Proteomes" id="UP000005640">
    <property type="component" value="Chromosome 6"/>
</dbReference>
<dbReference type="RNAct" id="Q7L2Z9">
    <property type="molecule type" value="protein"/>
</dbReference>
<dbReference type="Bgee" id="ENSG00000031691">
    <property type="expression patterns" value="Expressed in primordial germ cell in gonad and 129 other cell types or tissues"/>
</dbReference>
<dbReference type="GO" id="GO:0015629">
    <property type="term" value="C:actin cytoskeleton"/>
    <property type="evidence" value="ECO:0000314"/>
    <property type="project" value="HPA"/>
</dbReference>
<dbReference type="GO" id="GO:0005829">
    <property type="term" value="C:cytosol"/>
    <property type="evidence" value="ECO:0000304"/>
    <property type="project" value="Reactome"/>
</dbReference>
<dbReference type="GO" id="GO:0000939">
    <property type="term" value="C:inner kinetochore"/>
    <property type="evidence" value="ECO:0000353"/>
    <property type="project" value="ComplexPortal"/>
</dbReference>
<dbReference type="GO" id="GO:0005654">
    <property type="term" value="C:nucleoplasm"/>
    <property type="evidence" value="ECO:0000314"/>
    <property type="project" value="HPA"/>
</dbReference>
<dbReference type="GO" id="GO:0005634">
    <property type="term" value="C:nucleus"/>
    <property type="evidence" value="ECO:0000318"/>
    <property type="project" value="GO_Central"/>
</dbReference>
<dbReference type="GO" id="GO:0007059">
    <property type="term" value="P:chromosome segregation"/>
    <property type="evidence" value="ECO:0000303"/>
    <property type="project" value="ComplexPortal"/>
</dbReference>
<dbReference type="GO" id="GO:0051310">
    <property type="term" value="P:metaphase chromosome alignment"/>
    <property type="evidence" value="ECO:0000315"/>
    <property type="project" value="UniProtKB"/>
</dbReference>
<dbReference type="GO" id="GO:1905342">
    <property type="term" value="P:positive regulation of protein localization to kinetochore"/>
    <property type="evidence" value="ECO:0000315"/>
    <property type="project" value="UniProtKB"/>
</dbReference>
<dbReference type="InterPro" id="IPR025212">
    <property type="entry name" value="CAD_CENP-Q"/>
</dbReference>
<dbReference type="PANTHER" id="PTHR31345">
    <property type="entry name" value="CENTROMERE PROTEIN Q"/>
    <property type="match status" value="1"/>
</dbReference>
<dbReference type="PANTHER" id="PTHR31345:SF3">
    <property type="entry name" value="CENTROMERE PROTEIN Q"/>
    <property type="match status" value="1"/>
</dbReference>
<dbReference type="Pfam" id="PF13094">
    <property type="entry name" value="CENP-Q"/>
    <property type="match status" value="1"/>
</dbReference>
<comment type="function">
    <text evidence="4 5">Component of the CENPA-CAD (nucleosome distal) complex, a complex recruited to centromeres which is involved in assembly of kinetochore proteins, mitotic progression and chromosome segregation. May be involved in incorporation of newly synthesized CENPA into centromeres via its interaction with the CENPA-NAC complex (PubMed:16622420). Plays an important role in chromosome congression and in the recruitment of CENP-O complex (which comprises CENPO, CENPP, CENPQ and CENPU), CENPE and PLK1 to the kinetochores (PubMed:25395579).</text>
</comment>
<comment type="subunit">
    <text evidence="3 4">Component of the CENPA-CAD complex, composed of CENPI, CENPK, CENPL, CENPO, CENPP, CENPQ, CENPR and CENPS. The CENPA-CAD complex interacts with the CENPA-NAC complex, at least composed of CENPA, CENPC, CENPH, CENPM, CENPN, CENPT and CENPU.</text>
</comment>
<comment type="interaction">
    <interactant intactId="EBI-2350265">
        <id>Q7L2Z9</id>
    </interactant>
    <interactant intactId="EBI-5463075">
        <id>Q4LEZ3</id>
        <label>AARD</label>
    </interactant>
    <organismsDiffer>false</organismsDiffer>
    <experiments>3</experiments>
</comment>
<comment type="interaction">
    <interactant intactId="EBI-2350265">
        <id>Q7L2Z9</id>
    </interactant>
    <interactant intactId="EBI-11096309">
        <id>Q9NYB9-2</id>
        <label>ABI2</label>
    </interactant>
    <organismsDiffer>false</organismsDiffer>
    <experiments>3</experiments>
</comment>
<comment type="interaction">
    <interactant intactId="EBI-2350265">
        <id>Q7L2Z9</id>
    </interactant>
    <interactant intactId="EBI-742038">
        <id>Q9P2A4</id>
        <label>ABI3</label>
    </interactant>
    <organismsDiffer>false</organismsDiffer>
    <experiments>3</experiments>
</comment>
<comment type="interaction">
    <interactant intactId="EBI-2350265">
        <id>Q7L2Z9</id>
    </interactant>
    <interactant intactId="EBI-1170906">
        <id>P15336</id>
        <label>ATF2</label>
    </interactant>
    <organismsDiffer>false</organismsDiffer>
    <experiments>5</experiments>
</comment>
<comment type="interaction">
    <interactant intactId="EBI-2350265">
        <id>Q7L2Z9</id>
    </interactant>
    <interactant intactId="EBI-1045350">
        <id>Q16204</id>
        <label>CCDC6</label>
    </interactant>
    <organismsDiffer>false</organismsDiffer>
    <experiments>5</experiments>
</comment>
<comment type="interaction">
    <interactant intactId="EBI-2350265">
        <id>Q7L2Z9</id>
    </interactant>
    <interactant intactId="EBI-2515234">
        <id>Q71F23</id>
        <label>CENPU</label>
    </interactant>
    <organismsDiffer>false</organismsDiffer>
    <experiments>5</experiments>
</comment>
<comment type="interaction">
    <interactant intactId="EBI-2350265">
        <id>Q7L2Z9</id>
    </interactant>
    <interactant intactId="EBI-11748557">
        <id>Q9Y6C2-2</id>
        <label>EMILIN1</label>
    </interactant>
    <organismsDiffer>false</organismsDiffer>
    <experiments>3</experiments>
</comment>
<comment type="interaction">
    <interactant intactId="EBI-2350265">
        <id>Q7L2Z9</id>
    </interactant>
    <interactant intactId="EBI-12094670">
        <id>Q8WUI4-6</id>
        <label>HDAC7</label>
    </interactant>
    <organismsDiffer>false</organismsDiffer>
    <experiments>3</experiments>
</comment>
<comment type="interaction">
    <interactant intactId="EBI-2350265">
        <id>Q7L2Z9</id>
    </interactant>
    <interactant intactId="EBI-746815">
        <id>Q86YM7</id>
        <label>HOMER1</label>
    </interactant>
    <organismsDiffer>false</organismsDiffer>
    <experiments>6</experiments>
</comment>
<comment type="interaction">
    <interactant intactId="EBI-2350265">
        <id>Q7L2Z9</id>
    </interactant>
    <interactant intactId="EBI-1773646">
        <id>Q9BRV8</id>
        <label>SIKE1</label>
    </interactant>
    <organismsDiffer>false</organismsDiffer>
    <experiments>3</experiments>
</comment>
<comment type="interaction">
    <interactant intactId="EBI-2350265">
        <id>Q7L2Z9</id>
    </interactant>
    <interactant intactId="EBI-1046690">
        <id>O60749</id>
        <label>SNX2</label>
    </interactant>
    <organismsDiffer>false</organismsDiffer>
    <experiments>3</experiments>
</comment>
<comment type="subcellular location">
    <subcellularLocation>
        <location evidence="4">Nucleus</location>
    </subcellularLocation>
    <subcellularLocation>
        <location evidence="4">Chromosome</location>
        <location evidence="4">Centromere</location>
    </subcellularLocation>
    <text>Localizes exclusively in the centromeres. The CENPA-CAD complex is probably recruited on centromeres by the CENPA-NAC complex.</text>
</comment>
<comment type="PTM">
    <text evidence="5">Phosphorylation at Ser-50 is essential for CENPE recruitment to kinetochores and orderly chromosome congression.</text>
</comment>
<comment type="similarity">
    <text evidence="6">Belongs to the CENP-Q/OKP1 family.</text>
</comment>
<comment type="sequence caution" evidence="6">
    <conflict type="erroneous initiation">
        <sequence resource="EMBL-CDS" id="BAA91672"/>
    </conflict>
</comment>
<accession>Q7L2Z9</accession>
<accession>A8KAF1</accession>
<accession>Q6IN61</accession>
<accession>Q9NVS5</accession>
<name>CENPQ_HUMAN</name>
<gene>
    <name type="primary">CENPQ</name>
    <name type="synonym">C6orf139</name>
</gene>
<proteinExistence type="evidence at protein level"/>
<organism>
    <name type="scientific">Homo sapiens</name>
    <name type="common">Human</name>
    <dbReference type="NCBI Taxonomy" id="9606"/>
    <lineage>
        <taxon>Eukaryota</taxon>
        <taxon>Metazoa</taxon>
        <taxon>Chordata</taxon>
        <taxon>Craniata</taxon>
        <taxon>Vertebrata</taxon>
        <taxon>Euteleostomi</taxon>
        <taxon>Mammalia</taxon>
        <taxon>Eutheria</taxon>
        <taxon>Euarchontoglires</taxon>
        <taxon>Primates</taxon>
        <taxon>Haplorrhini</taxon>
        <taxon>Catarrhini</taxon>
        <taxon>Hominidae</taxon>
        <taxon>Homo</taxon>
    </lineage>
</organism>
<protein>
    <recommendedName>
        <fullName>Centromere protein Q</fullName>
        <shortName>CENP-Q</shortName>
    </recommendedName>
</protein>